<name>YADK_MICLU</name>
<organism>
    <name type="scientific">Micrococcus luteus</name>
    <name type="common">Micrococcus lysodeikticus</name>
    <dbReference type="NCBI Taxonomy" id="1270"/>
    <lineage>
        <taxon>Bacteria</taxon>
        <taxon>Bacillati</taxon>
        <taxon>Actinomycetota</taxon>
        <taxon>Actinomycetes</taxon>
        <taxon>Micrococcales</taxon>
        <taxon>Micrococcaceae</taxon>
        <taxon>Micrococcus</taxon>
    </lineage>
</organism>
<dbReference type="EMBL" id="X17524">
    <property type="protein sequence ID" value="CAA35569.1"/>
    <property type="molecule type" value="Genomic_DNA"/>
</dbReference>
<dbReference type="PIR" id="S29892">
    <property type="entry name" value="S29892"/>
</dbReference>
<dbReference type="SMR" id="P33111"/>
<dbReference type="STRING" id="1232675.GCA_000309825_02136"/>
<dbReference type="GO" id="GO:0005829">
    <property type="term" value="C:cytosol"/>
    <property type="evidence" value="ECO:0007669"/>
    <property type="project" value="TreeGrafter"/>
</dbReference>
<dbReference type="GO" id="GO:0070006">
    <property type="term" value="F:metalloaminopeptidase activity"/>
    <property type="evidence" value="ECO:0007669"/>
    <property type="project" value="TreeGrafter"/>
</dbReference>
<dbReference type="Gene3D" id="3.90.230.10">
    <property type="entry name" value="Creatinase/methionine aminopeptidase superfamily"/>
    <property type="match status" value="1"/>
</dbReference>
<dbReference type="InterPro" id="IPR036005">
    <property type="entry name" value="Creatinase/aminopeptidase-like"/>
</dbReference>
<dbReference type="InterPro" id="IPR000994">
    <property type="entry name" value="Pept_M24"/>
</dbReference>
<dbReference type="PANTHER" id="PTHR43330">
    <property type="entry name" value="METHIONINE AMINOPEPTIDASE"/>
    <property type="match status" value="1"/>
</dbReference>
<dbReference type="PANTHER" id="PTHR43330:SF27">
    <property type="entry name" value="METHIONINE AMINOPEPTIDASE"/>
    <property type="match status" value="1"/>
</dbReference>
<dbReference type="Pfam" id="PF00557">
    <property type="entry name" value="Peptidase_M24"/>
    <property type="match status" value="1"/>
</dbReference>
<dbReference type="SUPFAM" id="SSF55920">
    <property type="entry name" value="Creatinase/aminopeptidase"/>
    <property type="match status" value="1"/>
</dbReference>
<feature type="chain" id="PRO_0000066111" description="Uncharacterized protein in adk 3'region">
    <location>
        <begin position="1"/>
        <end position="84" status="greater than"/>
    </location>
</feature>
<feature type="non-terminal residue">
    <location>
        <position position="84"/>
    </location>
</feature>
<accession>P33111</accession>
<protein>
    <recommendedName>
        <fullName>Uncharacterized protein in adk 3'region</fullName>
    </recommendedName>
</protein>
<sequence length="84" mass="8781">MIGRRSLELKTAPQLLAMQRAGVVLSEALDAALAGAPGFTTAELDAVFAVVLAERGATSNFLGYYDFPASICTSVNEEVVHGIP</sequence>
<reference key="1">
    <citation type="journal article" date="1989" name="J. Mol. Evol.">
        <title>Spectinomycin operon of Micrococcus luteus: evolutionary implications of organization and novel codon usage.</title>
        <authorList>
            <person name="Ohama T."/>
            <person name="Muto A."/>
            <person name="Osawa S."/>
        </authorList>
    </citation>
    <scope>NUCLEOTIDE SEQUENCE [GENOMIC DNA]</scope>
</reference>
<proteinExistence type="predicted"/>